<name>RNH2_BORBZ</name>
<sequence length="181" mass="20525">MICGIDEVGRGCIFGPILSAAVVFKKKPSFIKELDDSKKLKKEKREYLSSLILKNSYYAFAEISNITIEKINIHNASLLAMQTAYENLKLNCSLVLVDGKFVPKITAKNVKAIIKGDSIIDEIKAASIIAKVKRDKLMDEYDKIYPLYLLKKNKGYPTKEHKNAIKKYGVLSLHRKNFKLI</sequence>
<reference key="1">
    <citation type="journal article" date="2011" name="J. Bacteriol.">
        <title>Whole-genome sequences of thirteen isolates of Borrelia burgdorferi.</title>
        <authorList>
            <person name="Schutzer S.E."/>
            <person name="Fraser-Liggett C.M."/>
            <person name="Casjens S.R."/>
            <person name="Qiu W.G."/>
            <person name="Dunn J.J."/>
            <person name="Mongodin E.F."/>
            <person name="Luft B.J."/>
        </authorList>
    </citation>
    <scope>NUCLEOTIDE SEQUENCE [LARGE SCALE GENOMIC DNA]</scope>
    <source>
        <strain>ZS7</strain>
    </source>
</reference>
<organism>
    <name type="scientific">Borreliella burgdorferi (strain ZS7)</name>
    <name type="common">Borrelia burgdorferi</name>
    <dbReference type="NCBI Taxonomy" id="445985"/>
    <lineage>
        <taxon>Bacteria</taxon>
        <taxon>Pseudomonadati</taxon>
        <taxon>Spirochaetota</taxon>
        <taxon>Spirochaetia</taxon>
        <taxon>Spirochaetales</taxon>
        <taxon>Borreliaceae</taxon>
        <taxon>Borreliella</taxon>
    </lineage>
</organism>
<accession>B7J0Y4</accession>
<dbReference type="EC" id="3.1.26.4" evidence="1"/>
<dbReference type="EMBL" id="CP001205">
    <property type="protein sequence ID" value="ACK74606.1"/>
    <property type="molecule type" value="Genomic_DNA"/>
</dbReference>
<dbReference type="RefSeq" id="WP_002658328.1">
    <property type="nucleotide sequence ID" value="NC_011728.1"/>
</dbReference>
<dbReference type="SMR" id="B7J0Y4"/>
<dbReference type="KEGG" id="bbz:BbuZS7_0045"/>
<dbReference type="HOGENOM" id="CLU_036532_3_1_12"/>
<dbReference type="Proteomes" id="UP000006901">
    <property type="component" value="Chromosome"/>
</dbReference>
<dbReference type="GO" id="GO:0005737">
    <property type="term" value="C:cytoplasm"/>
    <property type="evidence" value="ECO:0007669"/>
    <property type="project" value="UniProtKB-SubCell"/>
</dbReference>
<dbReference type="GO" id="GO:0032299">
    <property type="term" value="C:ribonuclease H2 complex"/>
    <property type="evidence" value="ECO:0007669"/>
    <property type="project" value="TreeGrafter"/>
</dbReference>
<dbReference type="GO" id="GO:0030145">
    <property type="term" value="F:manganese ion binding"/>
    <property type="evidence" value="ECO:0007669"/>
    <property type="project" value="UniProtKB-UniRule"/>
</dbReference>
<dbReference type="GO" id="GO:0003723">
    <property type="term" value="F:RNA binding"/>
    <property type="evidence" value="ECO:0007669"/>
    <property type="project" value="InterPro"/>
</dbReference>
<dbReference type="GO" id="GO:0004523">
    <property type="term" value="F:RNA-DNA hybrid ribonuclease activity"/>
    <property type="evidence" value="ECO:0007669"/>
    <property type="project" value="UniProtKB-UniRule"/>
</dbReference>
<dbReference type="GO" id="GO:0043137">
    <property type="term" value="P:DNA replication, removal of RNA primer"/>
    <property type="evidence" value="ECO:0007669"/>
    <property type="project" value="TreeGrafter"/>
</dbReference>
<dbReference type="GO" id="GO:0006298">
    <property type="term" value="P:mismatch repair"/>
    <property type="evidence" value="ECO:0007669"/>
    <property type="project" value="TreeGrafter"/>
</dbReference>
<dbReference type="CDD" id="cd07182">
    <property type="entry name" value="RNase_HII_bacteria_HII_like"/>
    <property type="match status" value="1"/>
</dbReference>
<dbReference type="Gene3D" id="3.30.420.10">
    <property type="entry name" value="Ribonuclease H-like superfamily/Ribonuclease H"/>
    <property type="match status" value="1"/>
</dbReference>
<dbReference type="HAMAP" id="MF_00052_B">
    <property type="entry name" value="RNase_HII_B"/>
    <property type="match status" value="1"/>
</dbReference>
<dbReference type="InterPro" id="IPR022898">
    <property type="entry name" value="RNase_HII"/>
</dbReference>
<dbReference type="InterPro" id="IPR001352">
    <property type="entry name" value="RNase_HII/HIII"/>
</dbReference>
<dbReference type="InterPro" id="IPR024567">
    <property type="entry name" value="RNase_HII/HIII_dom"/>
</dbReference>
<dbReference type="InterPro" id="IPR012337">
    <property type="entry name" value="RNaseH-like_sf"/>
</dbReference>
<dbReference type="InterPro" id="IPR036397">
    <property type="entry name" value="RNaseH_sf"/>
</dbReference>
<dbReference type="NCBIfam" id="NF000595">
    <property type="entry name" value="PRK00015.1-3"/>
    <property type="match status" value="1"/>
</dbReference>
<dbReference type="PANTHER" id="PTHR10954">
    <property type="entry name" value="RIBONUCLEASE H2 SUBUNIT A"/>
    <property type="match status" value="1"/>
</dbReference>
<dbReference type="PANTHER" id="PTHR10954:SF18">
    <property type="entry name" value="RIBONUCLEASE HII"/>
    <property type="match status" value="1"/>
</dbReference>
<dbReference type="Pfam" id="PF01351">
    <property type="entry name" value="RNase_HII"/>
    <property type="match status" value="1"/>
</dbReference>
<dbReference type="SUPFAM" id="SSF53098">
    <property type="entry name" value="Ribonuclease H-like"/>
    <property type="match status" value="1"/>
</dbReference>
<dbReference type="PROSITE" id="PS51975">
    <property type="entry name" value="RNASE_H_2"/>
    <property type="match status" value="1"/>
</dbReference>
<gene>
    <name evidence="1" type="primary">rnhB</name>
    <name type="ordered locus">BbuZS7_0045</name>
</gene>
<protein>
    <recommendedName>
        <fullName evidence="1">Ribonuclease HII</fullName>
        <shortName evidence="1">RNase HII</shortName>
        <ecNumber evidence="1">3.1.26.4</ecNumber>
    </recommendedName>
</protein>
<keyword id="KW-0963">Cytoplasm</keyword>
<keyword id="KW-0255">Endonuclease</keyword>
<keyword id="KW-0378">Hydrolase</keyword>
<keyword id="KW-0464">Manganese</keyword>
<keyword id="KW-0479">Metal-binding</keyword>
<keyword id="KW-0540">Nuclease</keyword>
<evidence type="ECO:0000255" key="1">
    <source>
        <dbReference type="HAMAP-Rule" id="MF_00052"/>
    </source>
</evidence>
<evidence type="ECO:0000255" key="2">
    <source>
        <dbReference type="PROSITE-ProRule" id="PRU01319"/>
    </source>
</evidence>
<comment type="function">
    <text evidence="1">Endonuclease that specifically degrades the RNA of RNA-DNA hybrids.</text>
</comment>
<comment type="catalytic activity">
    <reaction evidence="1">
        <text>Endonucleolytic cleavage to 5'-phosphomonoester.</text>
        <dbReference type="EC" id="3.1.26.4"/>
    </reaction>
</comment>
<comment type="cofactor">
    <cofactor evidence="1">
        <name>Mn(2+)</name>
        <dbReference type="ChEBI" id="CHEBI:29035"/>
    </cofactor>
    <cofactor evidence="1">
        <name>Mg(2+)</name>
        <dbReference type="ChEBI" id="CHEBI:18420"/>
    </cofactor>
    <text evidence="1">Manganese or magnesium. Binds 1 divalent metal ion per monomer in the absence of substrate. May bind a second metal ion after substrate binding.</text>
</comment>
<comment type="subcellular location">
    <subcellularLocation>
        <location evidence="1">Cytoplasm</location>
    </subcellularLocation>
</comment>
<comment type="similarity">
    <text evidence="1">Belongs to the RNase HII family.</text>
</comment>
<feature type="chain" id="PRO_1000116842" description="Ribonuclease HII">
    <location>
        <begin position="1"/>
        <end position="181"/>
    </location>
</feature>
<feature type="domain" description="RNase H type-2" evidence="2">
    <location>
        <begin position="1"/>
        <end position="181"/>
    </location>
</feature>
<feature type="binding site" evidence="1">
    <location>
        <position position="6"/>
    </location>
    <ligand>
        <name>a divalent metal cation</name>
        <dbReference type="ChEBI" id="CHEBI:60240"/>
    </ligand>
</feature>
<feature type="binding site" evidence="1">
    <location>
        <position position="7"/>
    </location>
    <ligand>
        <name>a divalent metal cation</name>
        <dbReference type="ChEBI" id="CHEBI:60240"/>
    </ligand>
</feature>
<feature type="binding site" evidence="1">
    <location>
        <position position="98"/>
    </location>
    <ligand>
        <name>a divalent metal cation</name>
        <dbReference type="ChEBI" id="CHEBI:60240"/>
    </ligand>
</feature>
<proteinExistence type="inferred from homology"/>